<feature type="chain" id="PRO_1000203234" description="Phosphoribosylaminoimidazole-succinocarboxamide synthase">
    <location>
        <begin position="1"/>
        <end position="235"/>
    </location>
</feature>
<evidence type="ECO:0000255" key="1">
    <source>
        <dbReference type="HAMAP-Rule" id="MF_00137"/>
    </source>
</evidence>
<comment type="catalytic activity">
    <reaction evidence="1">
        <text>5-amino-1-(5-phospho-D-ribosyl)imidazole-4-carboxylate + L-aspartate + ATP = (2S)-2-[5-amino-1-(5-phospho-beta-D-ribosyl)imidazole-4-carboxamido]succinate + ADP + phosphate + 2 H(+)</text>
        <dbReference type="Rhea" id="RHEA:22628"/>
        <dbReference type="ChEBI" id="CHEBI:15378"/>
        <dbReference type="ChEBI" id="CHEBI:29991"/>
        <dbReference type="ChEBI" id="CHEBI:30616"/>
        <dbReference type="ChEBI" id="CHEBI:43474"/>
        <dbReference type="ChEBI" id="CHEBI:58443"/>
        <dbReference type="ChEBI" id="CHEBI:77657"/>
        <dbReference type="ChEBI" id="CHEBI:456216"/>
        <dbReference type="EC" id="6.3.2.6"/>
    </reaction>
</comment>
<comment type="pathway">
    <text evidence="1">Purine metabolism; IMP biosynthesis via de novo pathway; 5-amino-1-(5-phospho-D-ribosyl)imidazole-4-carboxamide from 5-amino-1-(5-phospho-D-ribosyl)imidazole-4-carboxylate: step 1/2.</text>
</comment>
<comment type="similarity">
    <text evidence="1">Belongs to the SAICAR synthetase family.</text>
</comment>
<gene>
    <name evidence="1" type="primary">purC</name>
    <name type="ordered locus">NAMH_0651</name>
</gene>
<protein>
    <recommendedName>
        <fullName evidence="1">Phosphoribosylaminoimidazole-succinocarboxamide synthase</fullName>
        <ecNumber evidence="1">6.3.2.6</ecNumber>
    </recommendedName>
    <alternativeName>
        <fullName evidence="1">SAICAR synthetase</fullName>
    </alternativeName>
</protein>
<name>PUR7_NAUPA</name>
<proteinExistence type="inferred from homology"/>
<dbReference type="EC" id="6.3.2.6" evidence="1"/>
<dbReference type="EMBL" id="CP001279">
    <property type="protein sequence ID" value="ACM92547.1"/>
    <property type="molecule type" value="Genomic_DNA"/>
</dbReference>
<dbReference type="RefSeq" id="WP_012663918.1">
    <property type="nucleotide sequence ID" value="NC_012115.1"/>
</dbReference>
<dbReference type="SMR" id="B9L8V5"/>
<dbReference type="STRING" id="598659.NAMH_0651"/>
<dbReference type="KEGG" id="nam:NAMH_0651"/>
<dbReference type="eggNOG" id="COG0152">
    <property type="taxonomic scope" value="Bacteria"/>
</dbReference>
<dbReference type="HOGENOM" id="CLU_061495_2_0_7"/>
<dbReference type="OrthoDB" id="9801549at2"/>
<dbReference type="UniPathway" id="UPA00074">
    <property type="reaction ID" value="UER00131"/>
</dbReference>
<dbReference type="Proteomes" id="UP000000448">
    <property type="component" value="Chromosome"/>
</dbReference>
<dbReference type="GO" id="GO:0005524">
    <property type="term" value="F:ATP binding"/>
    <property type="evidence" value="ECO:0007669"/>
    <property type="project" value="UniProtKB-KW"/>
</dbReference>
<dbReference type="GO" id="GO:0004639">
    <property type="term" value="F:phosphoribosylaminoimidazolesuccinocarboxamide synthase activity"/>
    <property type="evidence" value="ECO:0007669"/>
    <property type="project" value="UniProtKB-UniRule"/>
</dbReference>
<dbReference type="GO" id="GO:0006189">
    <property type="term" value="P:'de novo' IMP biosynthetic process"/>
    <property type="evidence" value="ECO:0007669"/>
    <property type="project" value="UniProtKB-UniRule"/>
</dbReference>
<dbReference type="GO" id="GO:0009236">
    <property type="term" value="P:cobalamin biosynthetic process"/>
    <property type="evidence" value="ECO:0007669"/>
    <property type="project" value="InterPro"/>
</dbReference>
<dbReference type="CDD" id="cd01415">
    <property type="entry name" value="SAICAR_synt_PurC"/>
    <property type="match status" value="1"/>
</dbReference>
<dbReference type="FunFam" id="3.30.470.20:FF:000006">
    <property type="entry name" value="Phosphoribosylaminoimidazole-succinocarboxamide synthase"/>
    <property type="match status" value="1"/>
</dbReference>
<dbReference type="Gene3D" id="3.30.470.20">
    <property type="entry name" value="ATP-grasp fold, B domain"/>
    <property type="match status" value="1"/>
</dbReference>
<dbReference type="Gene3D" id="3.30.200.20">
    <property type="entry name" value="Phosphorylase Kinase, domain 1"/>
    <property type="match status" value="1"/>
</dbReference>
<dbReference type="HAMAP" id="MF_00137">
    <property type="entry name" value="SAICAR_synth"/>
    <property type="match status" value="1"/>
</dbReference>
<dbReference type="InterPro" id="IPR028923">
    <property type="entry name" value="SAICAR_synt/ADE2_N"/>
</dbReference>
<dbReference type="InterPro" id="IPR033934">
    <property type="entry name" value="SAICAR_synt_PurC"/>
</dbReference>
<dbReference type="InterPro" id="IPR001636">
    <property type="entry name" value="SAICAR_synth"/>
</dbReference>
<dbReference type="InterPro" id="IPR050089">
    <property type="entry name" value="SAICAR_synthetase"/>
</dbReference>
<dbReference type="InterPro" id="IPR018236">
    <property type="entry name" value="SAICAR_synthetase_CS"/>
</dbReference>
<dbReference type="NCBIfam" id="TIGR00081">
    <property type="entry name" value="purC"/>
    <property type="match status" value="1"/>
</dbReference>
<dbReference type="PANTHER" id="PTHR43599">
    <property type="entry name" value="MULTIFUNCTIONAL PROTEIN ADE2"/>
    <property type="match status" value="1"/>
</dbReference>
<dbReference type="PANTHER" id="PTHR43599:SF3">
    <property type="entry name" value="SI:DKEY-6E2.2"/>
    <property type="match status" value="1"/>
</dbReference>
<dbReference type="Pfam" id="PF01259">
    <property type="entry name" value="SAICAR_synt"/>
    <property type="match status" value="1"/>
</dbReference>
<dbReference type="SUPFAM" id="SSF56104">
    <property type="entry name" value="SAICAR synthase-like"/>
    <property type="match status" value="1"/>
</dbReference>
<dbReference type="PROSITE" id="PS01057">
    <property type="entry name" value="SAICAR_SYNTHETASE_1"/>
    <property type="match status" value="1"/>
</dbReference>
<dbReference type="PROSITE" id="PS01058">
    <property type="entry name" value="SAICAR_SYNTHETASE_2"/>
    <property type="match status" value="1"/>
</dbReference>
<sequence length="235" mass="26904">MKLLYEGKAKRIYETQNPNEVICEFKDSLTAFNGEKADEESGKGALNCAITTLIFEALEKEGIPTHLIKQIDETKQLVKKVDIILIEVVVRNIVAGSLAKRLGLKEGTKLPFTIVEFYYKNDDLNDPLINDDHAMVLELVKTRKELDLLREYGLKVNKFLSEFFDKVGLTLVDFKIEFGRDENGNIILADEITPDSCRLWDKKTGKKLDKDLFRFNLGNIKEAYTEVLNRLKDVK</sequence>
<keyword id="KW-0067">ATP-binding</keyword>
<keyword id="KW-0436">Ligase</keyword>
<keyword id="KW-0547">Nucleotide-binding</keyword>
<keyword id="KW-0658">Purine biosynthesis</keyword>
<accession>B9L8V5</accession>
<reference key="1">
    <citation type="journal article" date="2009" name="PLoS Genet.">
        <title>Adaptations to submarine hydrothermal environments exemplified by the genome of Nautilia profundicola.</title>
        <authorList>
            <person name="Campbell B.J."/>
            <person name="Smith J.L."/>
            <person name="Hanson T.E."/>
            <person name="Klotz M.G."/>
            <person name="Stein L.Y."/>
            <person name="Lee C.K."/>
            <person name="Wu D."/>
            <person name="Robinson J.M."/>
            <person name="Khouri H.M."/>
            <person name="Eisen J.A."/>
            <person name="Cary S.C."/>
        </authorList>
    </citation>
    <scope>NUCLEOTIDE SEQUENCE [LARGE SCALE GENOMIC DNA]</scope>
    <source>
        <strain>ATCC BAA-1463 / DSM 18972 / AmH</strain>
    </source>
</reference>
<organism>
    <name type="scientific">Nautilia profundicola (strain ATCC BAA-1463 / DSM 18972 / AmH)</name>
    <dbReference type="NCBI Taxonomy" id="598659"/>
    <lineage>
        <taxon>Bacteria</taxon>
        <taxon>Pseudomonadati</taxon>
        <taxon>Campylobacterota</taxon>
        <taxon>Epsilonproteobacteria</taxon>
        <taxon>Nautiliales</taxon>
        <taxon>Nautiliaceae</taxon>
        <taxon>Nautilia</taxon>
    </lineage>
</organism>